<reference key="1">
    <citation type="journal article" date="2011" name="J. Bacteriol.">
        <title>Genome of Ochrobactrum anthropi ATCC 49188 T, a versatile opportunistic pathogen and symbiont of several eukaryotic hosts.</title>
        <authorList>
            <person name="Chain P.S."/>
            <person name="Lang D.M."/>
            <person name="Comerci D.J."/>
            <person name="Malfatti S.A."/>
            <person name="Vergez L.M."/>
            <person name="Shin M."/>
            <person name="Ugalde R.A."/>
            <person name="Garcia E."/>
            <person name="Tolmasky M.E."/>
        </authorList>
    </citation>
    <scope>NUCLEOTIDE SEQUENCE [LARGE SCALE GENOMIC DNA]</scope>
    <source>
        <strain>ATCC 49188 / DSM 6882 / CCUG 24695 / JCM 21032 / LMG 3331 / NBRC 15819 / NCTC 12168 / Alc 37</strain>
    </source>
</reference>
<keyword id="KW-1185">Reference proteome</keyword>
<keyword id="KW-0687">Ribonucleoprotein</keyword>
<keyword id="KW-0689">Ribosomal protein</keyword>
<protein>
    <recommendedName>
        <fullName evidence="1">Large ribosomal subunit protein bL19</fullName>
    </recommendedName>
    <alternativeName>
        <fullName evidence="2">50S ribosomal protein L19</fullName>
    </alternativeName>
</protein>
<evidence type="ECO:0000255" key="1">
    <source>
        <dbReference type="HAMAP-Rule" id="MF_00402"/>
    </source>
</evidence>
<evidence type="ECO:0000305" key="2"/>
<name>RL19_BRUA4</name>
<sequence>MTDIIRQLEAEQAAKIEEKRKLPDFQPGDTVRVQVRVTEGTRTRVQAYEGVCIARSGAGLNENFTVRKISYGEGVERVFPVYSPIVEGVELVRRGKVRRAKLYYLRGLTGKAARIAEKKDNRTKAEREADKAAAAKAEAAKAAAE</sequence>
<accession>A6WXG3</accession>
<dbReference type="EMBL" id="CP000758">
    <property type="protein sequence ID" value="ABS13667.1"/>
    <property type="molecule type" value="Genomic_DNA"/>
</dbReference>
<dbReference type="RefSeq" id="WP_006467977.1">
    <property type="nucleotide sequence ID" value="NC_009667.1"/>
</dbReference>
<dbReference type="SMR" id="A6WXG3"/>
<dbReference type="STRING" id="439375.Oant_0946"/>
<dbReference type="GeneID" id="61318626"/>
<dbReference type="KEGG" id="oan:Oant_0946"/>
<dbReference type="eggNOG" id="COG0335">
    <property type="taxonomic scope" value="Bacteria"/>
</dbReference>
<dbReference type="HOGENOM" id="CLU_103507_0_2_5"/>
<dbReference type="PhylomeDB" id="A6WXG3"/>
<dbReference type="Proteomes" id="UP000002301">
    <property type="component" value="Chromosome 1"/>
</dbReference>
<dbReference type="GO" id="GO:0022625">
    <property type="term" value="C:cytosolic large ribosomal subunit"/>
    <property type="evidence" value="ECO:0007669"/>
    <property type="project" value="TreeGrafter"/>
</dbReference>
<dbReference type="GO" id="GO:0003735">
    <property type="term" value="F:structural constituent of ribosome"/>
    <property type="evidence" value="ECO:0007669"/>
    <property type="project" value="InterPro"/>
</dbReference>
<dbReference type="GO" id="GO:0006412">
    <property type="term" value="P:translation"/>
    <property type="evidence" value="ECO:0007669"/>
    <property type="project" value="UniProtKB-UniRule"/>
</dbReference>
<dbReference type="FunFam" id="2.30.30.790:FF:000001">
    <property type="entry name" value="50S ribosomal protein L19"/>
    <property type="match status" value="1"/>
</dbReference>
<dbReference type="Gene3D" id="2.30.30.790">
    <property type="match status" value="1"/>
</dbReference>
<dbReference type="HAMAP" id="MF_00402">
    <property type="entry name" value="Ribosomal_bL19"/>
    <property type="match status" value="1"/>
</dbReference>
<dbReference type="InterPro" id="IPR001857">
    <property type="entry name" value="Ribosomal_bL19"/>
</dbReference>
<dbReference type="InterPro" id="IPR018257">
    <property type="entry name" value="Ribosomal_bL19_CS"/>
</dbReference>
<dbReference type="InterPro" id="IPR038657">
    <property type="entry name" value="Ribosomal_bL19_sf"/>
</dbReference>
<dbReference type="InterPro" id="IPR008991">
    <property type="entry name" value="Translation_prot_SH3-like_sf"/>
</dbReference>
<dbReference type="NCBIfam" id="TIGR01024">
    <property type="entry name" value="rplS_bact"/>
    <property type="match status" value="1"/>
</dbReference>
<dbReference type="PANTHER" id="PTHR15680:SF9">
    <property type="entry name" value="LARGE RIBOSOMAL SUBUNIT PROTEIN BL19M"/>
    <property type="match status" value="1"/>
</dbReference>
<dbReference type="PANTHER" id="PTHR15680">
    <property type="entry name" value="RIBOSOMAL PROTEIN L19"/>
    <property type="match status" value="1"/>
</dbReference>
<dbReference type="Pfam" id="PF01245">
    <property type="entry name" value="Ribosomal_L19"/>
    <property type="match status" value="1"/>
</dbReference>
<dbReference type="PIRSF" id="PIRSF002191">
    <property type="entry name" value="Ribosomal_L19"/>
    <property type="match status" value="1"/>
</dbReference>
<dbReference type="PRINTS" id="PR00061">
    <property type="entry name" value="RIBOSOMALL19"/>
</dbReference>
<dbReference type="SUPFAM" id="SSF50104">
    <property type="entry name" value="Translation proteins SH3-like domain"/>
    <property type="match status" value="1"/>
</dbReference>
<dbReference type="PROSITE" id="PS01015">
    <property type="entry name" value="RIBOSOMAL_L19"/>
    <property type="match status" value="1"/>
</dbReference>
<feature type="chain" id="PRO_1000049711" description="Large ribosomal subunit protein bL19">
    <location>
        <begin position="1"/>
        <end position="145"/>
    </location>
</feature>
<gene>
    <name evidence="1" type="primary">rplS</name>
    <name type="ordered locus">Oant_0946</name>
</gene>
<proteinExistence type="inferred from homology"/>
<comment type="function">
    <text evidence="1">This protein is located at the 30S-50S ribosomal subunit interface and may play a role in the structure and function of the aminoacyl-tRNA binding site.</text>
</comment>
<comment type="similarity">
    <text evidence="1">Belongs to the bacterial ribosomal protein bL19 family.</text>
</comment>
<organism>
    <name type="scientific">Brucella anthropi (strain ATCC 49188 / DSM 6882 / CCUG 24695 / JCM 21032 / LMG 3331 / NBRC 15819 / NCTC 12168 / Alc 37)</name>
    <name type="common">Ochrobactrum anthropi</name>
    <dbReference type="NCBI Taxonomy" id="439375"/>
    <lineage>
        <taxon>Bacteria</taxon>
        <taxon>Pseudomonadati</taxon>
        <taxon>Pseudomonadota</taxon>
        <taxon>Alphaproteobacteria</taxon>
        <taxon>Hyphomicrobiales</taxon>
        <taxon>Brucellaceae</taxon>
        <taxon>Brucella/Ochrobactrum group</taxon>
        <taxon>Brucella</taxon>
    </lineage>
</organism>